<sequence length="548" mass="61743">MDRFGDISEGEVDHSFFDSDFEDTKKCESNSIFDKQNDDDFKEGINKDIKNLNLKFGVQNDNLKEKIDNDTENVNVKLGIQTKENYLTQKGNERKPKFPSKEQHVENDPIQTRSPSLLTSSRSKKLCDTTKGNKLHLPVPNRIPKIVKGEDDYYTDGEESSDDGKKYHVRSKSAKPSSNLKKNNTSKKYSKASSSSLSSSSSRSSSDCSDIGSDMQNKPDSGSSGKRVSSVTPSSPKQKCKSGRKSSAKQKAGDYNAESEDNVTDVTPASTPDSSPAQPFELSQSQNQKVKVKRQENVSRDVYEDVEALKNDSRCLKSAKRKEKHGQNFAPKSSVLDANLDRRSKQKVLHDTMDLNHLLKAFLQLDKKGPQKHHFEQPSIIPRKNYSFTREEVRQIDRENQRLLKELSRQAEKPGNKSTIPGRSLGHPPKLYHSALNRQREQQRIERENMALLKRLEAVKPTVGMKRSEQLMDYHRNISYLNPSPSVRRVRSTLGHYSPLRGASRTSSATSGLSCKTDRSVLDTSSGFLLRPKPPNIQCSNSKVLRSH</sequence>
<proteinExistence type="evidence at protein level"/>
<feature type="chain" id="PRO_0000309227" description="Cilia- and flagella-associated protein 97" evidence="4">
    <location>
        <begin position="1"/>
        <end position="548"/>
    </location>
</feature>
<feature type="region of interest" description="Disordered" evidence="3">
    <location>
        <begin position="85"/>
        <end position="297"/>
    </location>
</feature>
<feature type="region of interest" description="Disordered" evidence="3">
    <location>
        <begin position="407"/>
        <end position="431"/>
    </location>
</feature>
<feature type="region of interest" description="Disordered" evidence="3">
    <location>
        <begin position="497"/>
        <end position="548"/>
    </location>
</feature>
<feature type="coiled-coil region" evidence="2">
    <location>
        <begin position="383"/>
        <end position="460"/>
    </location>
</feature>
<feature type="compositionally biased region" description="Basic and acidic residues" evidence="3">
    <location>
        <begin position="91"/>
        <end position="107"/>
    </location>
</feature>
<feature type="compositionally biased region" description="Low complexity" evidence="3">
    <location>
        <begin position="112"/>
        <end position="121"/>
    </location>
</feature>
<feature type="compositionally biased region" description="Acidic residues" evidence="3">
    <location>
        <begin position="152"/>
        <end position="161"/>
    </location>
</feature>
<feature type="compositionally biased region" description="Low complexity" evidence="3">
    <location>
        <begin position="191"/>
        <end position="209"/>
    </location>
</feature>
<feature type="compositionally biased region" description="Polar residues" evidence="3">
    <location>
        <begin position="214"/>
        <end position="237"/>
    </location>
</feature>
<feature type="compositionally biased region" description="Basic residues" evidence="3">
    <location>
        <begin position="238"/>
        <end position="248"/>
    </location>
</feature>
<feature type="compositionally biased region" description="Polar residues" evidence="3">
    <location>
        <begin position="264"/>
        <end position="289"/>
    </location>
</feature>
<feature type="compositionally biased region" description="Polar residues" evidence="3">
    <location>
        <begin position="504"/>
        <end position="514"/>
    </location>
</feature>
<feature type="compositionally biased region" description="Polar residues" evidence="3">
    <location>
        <begin position="537"/>
        <end position="548"/>
    </location>
</feature>
<feature type="modified residue" description="Phosphoserine" evidence="6">
    <location>
        <position position="8"/>
    </location>
</feature>
<feature type="modified residue" description="Phosphoserine" evidence="6">
    <location>
        <position position="19"/>
    </location>
</feature>
<feature type="modified residue" description="Phosphothreonine" evidence="1">
    <location>
        <position position="155"/>
    </location>
</feature>
<feature type="modified residue" description="Phosphoserine" evidence="6">
    <location>
        <position position="160"/>
    </location>
</feature>
<feature type="modified residue" description="Phosphoserine" evidence="6">
    <location>
        <position position="161"/>
    </location>
</feature>
<feature type="modified residue" description="Phosphoserine" evidence="1">
    <location>
        <position position="235"/>
    </location>
</feature>
<feature type="modified residue" description="Phosphoserine" evidence="6">
    <location>
        <position position="259"/>
    </location>
</feature>
<name>CFA97_RAT</name>
<dbReference type="EMBL" id="BC082052">
    <property type="protein sequence ID" value="AAH82052.1"/>
    <property type="molecule type" value="mRNA"/>
</dbReference>
<dbReference type="RefSeq" id="NP_001014023.1">
    <property type="nucleotide sequence ID" value="NM_001014001.1"/>
</dbReference>
<dbReference type="RefSeq" id="XP_008769484.1">
    <property type="nucleotide sequence ID" value="XM_008771262.1"/>
</dbReference>
<dbReference type="RefSeq" id="XP_008769485.1">
    <property type="nucleotide sequence ID" value="XM_008771263.1"/>
</dbReference>
<dbReference type="RefSeq" id="XP_008769486.1">
    <property type="nucleotide sequence ID" value="XM_008771264.4"/>
</dbReference>
<dbReference type="RefSeq" id="XP_017455608.1">
    <property type="nucleotide sequence ID" value="XM_017600119.1"/>
</dbReference>
<dbReference type="SMR" id="Q66H34"/>
<dbReference type="FunCoup" id="Q66H34">
    <property type="interactions" value="3084"/>
</dbReference>
<dbReference type="STRING" id="10116.ENSRNOP00000042262"/>
<dbReference type="GlyGen" id="Q66H34">
    <property type="glycosylation" value="2 sites"/>
</dbReference>
<dbReference type="iPTMnet" id="Q66H34"/>
<dbReference type="PhosphoSitePlus" id="Q66H34"/>
<dbReference type="PaxDb" id="10116-ENSRNOP00000042262"/>
<dbReference type="Ensembl" id="ENSRNOT00000045721.5">
    <property type="protein sequence ID" value="ENSRNOP00000042262.3"/>
    <property type="gene ID" value="ENSRNOG00000032192.5"/>
</dbReference>
<dbReference type="GeneID" id="306469"/>
<dbReference type="KEGG" id="rno:306469"/>
<dbReference type="AGR" id="RGD:1307325"/>
<dbReference type="CTD" id="57587"/>
<dbReference type="RGD" id="1307325">
    <property type="gene designation" value="Cfap97"/>
</dbReference>
<dbReference type="eggNOG" id="ENOG502S0ZF">
    <property type="taxonomic scope" value="Eukaryota"/>
</dbReference>
<dbReference type="GeneTree" id="ENSGT00390000010356"/>
<dbReference type="HOGENOM" id="CLU_040301_1_0_1"/>
<dbReference type="InParanoid" id="Q66H34"/>
<dbReference type="PhylomeDB" id="Q66H34"/>
<dbReference type="TreeFam" id="TF336369"/>
<dbReference type="PRO" id="PR:Q66H34"/>
<dbReference type="Proteomes" id="UP000002494">
    <property type="component" value="Chromosome 16"/>
</dbReference>
<dbReference type="Bgee" id="ENSRNOG00000032192">
    <property type="expression patterns" value="Expressed in testis and 20 other cell types or tissues"/>
</dbReference>
<dbReference type="InterPro" id="IPR038791">
    <property type="entry name" value="Cfap97/Hemingway"/>
</dbReference>
<dbReference type="InterPro" id="IPR029488">
    <property type="entry name" value="Hmw/CFAP97"/>
</dbReference>
<dbReference type="PANTHER" id="PTHR23035:SF1">
    <property type="entry name" value="CILIA- AND FLAGELLA-ASSOCIATED PROTEIN 97"/>
    <property type="match status" value="1"/>
</dbReference>
<dbReference type="PANTHER" id="PTHR23035">
    <property type="entry name" value="CILIA- AND FLAGELLA-ASSOCIATED PROTEIN 97-RELATED"/>
    <property type="match status" value="1"/>
</dbReference>
<dbReference type="Pfam" id="PF13879">
    <property type="entry name" value="Hmw_CFAP97"/>
    <property type="match status" value="1"/>
</dbReference>
<keyword id="KW-0175">Coiled coil</keyword>
<keyword id="KW-0597">Phosphoprotein</keyword>
<keyword id="KW-1185">Reference proteome</keyword>
<gene>
    <name evidence="5" type="primary">Cfap97</name>
</gene>
<accession>Q66H34</accession>
<comment type="similarity">
    <text evidence="4">Belongs to the CFAP97 family.</text>
</comment>
<organism>
    <name type="scientific">Rattus norvegicus</name>
    <name type="common">Rat</name>
    <dbReference type="NCBI Taxonomy" id="10116"/>
    <lineage>
        <taxon>Eukaryota</taxon>
        <taxon>Metazoa</taxon>
        <taxon>Chordata</taxon>
        <taxon>Craniata</taxon>
        <taxon>Vertebrata</taxon>
        <taxon>Euteleostomi</taxon>
        <taxon>Mammalia</taxon>
        <taxon>Eutheria</taxon>
        <taxon>Euarchontoglires</taxon>
        <taxon>Glires</taxon>
        <taxon>Rodentia</taxon>
        <taxon>Myomorpha</taxon>
        <taxon>Muroidea</taxon>
        <taxon>Muridae</taxon>
        <taxon>Murinae</taxon>
        <taxon>Rattus</taxon>
    </lineage>
</organism>
<protein>
    <recommendedName>
        <fullName evidence="5">Cilia- and flagella-associated protein 97</fullName>
    </recommendedName>
</protein>
<evidence type="ECO:0000250" key="1">
    <source>
        <dbReference type="UniProtKB" id="Q9P2B7"/>
    </source>
</evidence>
<evidence type="ECO:0000255" key="2"/>
<evidence type="ECO:0000256" key="3">
    <source>
        <dbReference type="SAM" id="MobiDB-lite"/>
    </source>
</evidence>
<evidence type="ECO:0000305" key="4"/>
<evidence type="ECO:0000312" key="5">
    <source>
        <dbReference type="RGD" id="1307325"/>
    </source>
</evidence>
<evidence type="ECO:0007744" key="6">
    <source>
    </source>
</evidence>
<reference key="1">
    <citation type="journal article" date="2004" name="Genome Res.">
        <title>The status, quality, and expansion of the NIH full-length cDNA project: the Mammalian Gene Collection (MGC).</title>
        <authorList>
            <consortium name="The MGC Project Team"/>
        </authorList>
    </citation>
    <scope>NUCLEOTIDE SEQUENCE [LARGE SCALE MRNA]</scope>
    <source>
        <tissue>Testis</tissue>
    </source>
</reference>
<reference key="2">
    <citation type="journal article" date="2012" name="Nat. Commun.">
        <title>Quantitative maps of protein phosphorylation sites across 14 different rat organs and tissues.</title>
        <authorList>
            <person name="Lundby A."/>
            <person name="Secher A."/>
            <person name="Lage K."/>
            <person name="Nordsborg N.B."/>
            <person name="Dmytriyev A."/>
            <person name="Lundby C."/>
            <person name="Olsen J.V."/>
        </authorList>
    </citation>
    <scope>PHOSPHORYLATION [LARGE SCALE ANALYSIS] AT SER-8; SER-19; SER-160; SER-161 AND SER-259</scope>
    <scope>IDENTIFICATION BY MASS SPECTROMETRY [LARGE SCALE ANALYSIS]</scope>
</reference>